<reference key="1">
    <citation type="journal article" date="2009" name="J. Bacteriol.">
        <title>Genome sequences of three Agrobacterium biovars help elucidate the evolution of multichromosome genomes in bacteria.</title>
        <authorList>
            <person name="Slater S.C."/>
            <person name="Goldman B.S."/>
            <person name="Goodner B."/>
            <person name="Setubal J.C."/>
            <person name="Farrand S.K."/>
            <person name="Nester E.W."/>
            <person name="Burr T.J."/>
            <person name="Banta L."/>
            <person name="Dickerman A.W."/>
            <person name="Paulsen I."/>
            <person name="Otten L."/>
            <person name="Suen G."/>
            <person name="Welch R."/>
            <person name="Almeida N.F."/>
            <person name="Arnold F."/>
            <person name="Burton O.T."/>
            <person name="Du Z."/>
            <person name="Ewing A."/>
            <person name="Godsy E."/>
            <person name="Heisel S."/>
            <person name="Houmiel K.L."/>
            <person name="Jhaveri J."/>
            <person name="Lu J."/>
            <person name="Miller N.M."/>
            <person name="Norton S."/>
            <person name="Chen Q."/>
            <person name="Phoolcharoen W."/>
            <person name="Ohlin V."/>
            <person name="Ondrusek D."/>
            <person name="Pride N."/>
            <person name="Stricklin S.L."/>
            <person name="Sun J."/>
            <person name="Wheeler C."/>
            <person name="Wilson L."/>
            <person name="Zhu H."/>
            <person name="Wood D.W."/>
        </authorList>
    </citation>
    <scope>NUCLEOTIDE SEQUENCE [LARGE SCALE GENOMIC DNA]</scope>
    <source>
        <strain>ATCC BAA-846 / DSM 112012 / S4</strain>
    </source>
</reference>
<keyword id="KW-1185">Reference proteome</keyword>
<keyword id="KW-0687">Ribonucleoprotein</keyword>
<keyword id="KW-0689">Ribosomal protein</keyword>
<keyword id="KW-0694">RNA-binding</keyword>
<keyword id="KW-0699">rRNA-binding</keyword>
<accession>B9JYK9</accession>
<protein>
    <recommendedName>
        <fullName evidence="1">Small ribosomal subunit protein uS15</fullName>
    </recommendedName>
    <alternativeName>
        <fullName evidence="2">30S ribosomal protein S15</fullName>
    </alternativeName>
</protein>
<dbReference type="EMBL" id="CP000633">
    <property type="protein sequence ID" value="ACM35105.1"/>
    <property type="molecule type" value="Genomic_DNA"/>
</dbReference>
<dbReference type="RefSeq" id="WP_012654635.1">
    <property type="nucleotide sequence ID" value="NC_011989.1"/>
</dbReference>
<dbReference type="SMR" id="B9JYK9"/>
<dbReference type="STRING" id="311402.Avi_0173"/>
<dbReference type="KEGG" id="avi:Avi_0173"/>
<dbReference type="eggNOG" id="COG0184">
    <property type="taxonomic scope" value="Bacteria"/>
</dbReference>
<dbReference type="HOGENOM" id="CLU_148518_0_0_5"/>
<dbReference type="Proteomes" id="UP000001596">
    <property type="component" value="Chromosome 1"/>
</dbReference>
<dbReference type="GO" id="GO:0022627">
    <property type="term" value="C:cytosolic small ribosomal subunit"/>
    <property type="evidence" value="ECO:0007669"/>
    <property type="project" value="TreeGrafter"/>
</dbReference>
<dbReference type="GO" id="GO:0019843">
    <property type="term" value="F:rRNA binding"/>
    <property type="evidence" value="ECO:0007669"/>
    <property type="project" value="UniProtKB-UniRule"/>
</dbReference>
<dbReference type="GO" id="GO:0003735">
    <property type="term" value="F:structural constituent of ribosome"/>
    <property type="evidence" value="ECO:0007669"/>
    <property type="project" value="InterPro"/>
</dbReference>
<dbReference type="GO" id="GO:0006412">
    <property type="term" value="P:translation"/>
    <property type="evidence" value="ECO:0007669"/>
    <property type="project" value="UniProtKB-UniRule"/>
</dbReference>
<dbReference type="CDD" id="cd00353">
    <property type="entry name" value="Ribosomal_S15p_S13e"/>
    <property type="match status" value="1"/>
</dbReference>
<dbReference type="FunFam" id="1.10.287.10:FF:000002">
    <property type="entry name" value="30S ribosomal protein S15"/>
    <property type="match status" value="1"/>
</dbReference>
<dbReference type="Gene3D" id="6.10.250.3130">
    <property type="match status" value="1"/>
</dbReference>
<dbReference type="Gene3D" id="1.10.287.10">
    <property type="entry name" value="S15/NS1, RNA-binding"/>
    <property type="match status" value="1"/>
</dbReference>
<dbReference type="HAMAP" id="MF_01343_B">
    <property type="entry name" value="Ribosomal_uS15_B"/>
    <property type="match status" value="1"/>
</dbReference>
<dbReference type="InterPro" id="IPR000589">
    <property type="entry name" value="Ribosomal_uS15"/>
</dbReference>
<dbReference type="InterPro" id="IPR005290">
    <property type="entry name" value="Ribosomal_uS15_bac-type"/>
</dbReference>
<dbReference type="InterPro" id="IPR009068">
    <property type="entry name" value="uS15_NS1_RNA-bd_sf"/>
</dbReference>
<dbReference type="NCBIfam" id="TIGR00952">
    <property type="entry name" value="S15_bact"/>
    <property type="match status" value="1"/>
</dbReference>
<dbReference type="PANTHER" id="PTHR23321">
    <property type="entry name" value="RIBOSOMAL PROTEIN S15, BACTERIAL AND ORGANELLAR"/>
    <property type="match status" value="1"/>
</dbReference>
<dbReference type="PANTHER" id="PTHR23321:SF26">
    <property type="entry name" value="SMALL RIBOSOMAL SUBUNIT PROTEIN US15M"/>
    <property type="match status" value="1"/>
</dbReference>
<dbReference type="Pfam" id="PF00312">
    <property type="entry name" value="Ribosomal_S15"/>
    <property type="match status" value="1"/>
</dbReference>
<dbReference type="SMART" id="SM01387">
    <property type="entry name" value="Ribosomal_S15"/>
    <property type="match status" value="1"/>
</dbReference>
<dbReference type="SUPFAM" id="SSF47060">
    <property type="entry name" value="S15/NS1 RNA-binding domain"/>
    <property type="match status" value="1"/>
</dbReference>
<dbReference type="PROSITE" id="PS00362">
    <property type="entry name" value="RIBOSOMAL_S15"/>
    <property type="match status" value="1"/>
</dbReference>
<sequence length="89" mass="10113">MSITAERKSALIKEYATNEGDTGSPEVQVAILTERITNLTEHFKGHKKDNHSRRGLLTLVSTRRSLLDYLKKKDEGRYSKLIASLGIRR</sequence>
<feature type="chain" id="PRO_1000166394" description="Small ribosomal subunit protein uS15">
    <location>
        <begin position="1"/>
        <end position="89"/>
    </location>
</feature>
<name>RS15_ALLAM</name>
<comment type="function">
    <text evidence="1">One of the primary rRNA binding proteins, it binds directly to 16S rRNA where it helps nucleate assembly of the platform of the 30S subunit by binding and bridging several RNA helices of the 16S rRNA.</text>
</comment>
<comment type="function">
    <text evidence="1">Forms an intersubunit bridge (bridge B4) with the 23S rRNA of the 50S subunit in the ribosome.</text>
</comment>
<comment type="subunit">
    <text evidence="1">Part of the 30S ribosomal subunit. Forms a bridge to the 50S subunit in the 70S ribosome, contacting the 23S rRNA.</text>
</comment>
<comment type="similarity">
    <text evidence="1">Belongs to the universal ribosomal protein uS15 family.</text>
</comment>
<organism>
    <name type="scientific">Allorhizobium ampelinum (strain ATCC BAA-846 / DSM 112012 / S4)</name>
    <name type="common">Agrobacterium vitis (strain S4)</name>
    <dbReference type="NCBI Taxonomy" id="311402"/>
    <lineage>
        <taxon>Bacteria</taxon>
        <taxon>Pseudomonadati</taxon>
        <taxon>Pseudomonadota</taxon>
        <taxon>Alphaproteobacteria</taxon>
        <taxon>Hyphomicrobiales</taxon>
        <taxon>Rhizobiaceae</taxon>
        <taxon>Rhizobium/Agrobacterium group</taxon>
        <taxon>Allorhizobium</taxon>
        <taxon>Allorhizobium ampelinum</taxon>
    </lineage>
</organism>
<proteinExistence type="inferred from homology"/>
<gene>
    <name evidence="1" type="primary">rpsO</name>
    <name type="ordered locus">Avi_0173</name>
</gene>
<evidence type="ECO:0000255" key="1">
    <source>
        <dbReference type="HAMAP-Rule" id="MF_01343"/>
    </source>
</evidence>
<evidence type="ECO:0000305" key="2"/>